<organism>
    <name type="scientific">Mycolicibacterium paratuberculosis (strain ATCC BAA-968 / K-10)</name>
    <name type="common">Mycobacterium paratuberculosis</name>
    <dbReference type="NCBI Taxonomy" id="262316"/>
    <lineage>
        <taxon>Bacteria</taxon>
        <taxon>Bacillati</taxon>
        <taxon>Actinomycetota</taxon>
        <taxon>Actinomycetes</taxon>
        <taxon>Mycobacteriales</taxon>
        <taxon>Mycobacteriaceae</taxon>
        <taxon>Mycobacterium</taxon>
        <taxon>Mycobacterium avium complex (MAC)</taxon>
    </lineage>
</organism>
<feature type="chain" id="PRO_0000091161" description="Elongation factor G">
    <location>
        <begin position="1"/>
        <end position="701"/>
    </location>
</feature>
<feature type="domain" description="tr-type G">
    <location>
        <begin position="11"/>
        <end position="287"/>
    </location>
</feature>
<feature type="binding site" evidence="1">
    <location>
        <begin position="20"/>
        <end position="27"/>
    </location>
    <ligand>
        <name>GTP</name>
        <dbReference type="ChEBI" id="CHEBI:37565"/>
    </ligand>
</feature>
<feature type="binding site" evidence="1">
    <location>
        <begin position="84"/>
        <end position="88"/>
    </location>
    <ligand>
        <name>GTP</name>
        <dbReference type="ChEBI" id="CHEBI:37565"/>
    </ligand>
</feature>
<feature type="binding site" evidence="1">
    <location>
        <begin position="138"/>
        <end position="141"/>
    </location>
    <ligand>
        <name>GTP</name>
        <dbReference type="ChEBI" id="CHEBI:37565"/>
    </ligand>
</feature>
<sequence length="701" mass="77233">MAQKDVLTDLTKVRNIGIMAHIDAGKTTTTERILYYTGISYKIGEVHDGAATMDWMEQEQERGITITSAATTCFWNDNQINIIDTPGHVDFTVEVERSLRVLDGAVAVFDGKEGVEPQSEQVWRQADKYDVPRICFVNKMDKIGADFYFSVRTMEERLGANVIPIQIPVGSEGDFEGVVDLVEMKAKVWSAEAKLGEKYDVVDIPADLQEKAEEYRTKLLEAVAETDEALLDKYLGGEELTIEEIKGAIRKLTISSEAYPVLCGSAFKNKGVQPMLDAVIDYLPSPLDVPPAEGHVPGKEEELITRKPSTDEPFSALAFKVATHPFFGKLTYVRVYSGKVDSGSQVINSTKGKKERLGKLFQMHSNKENPVETASAGHIYAVIGLKDTTTGDTLSDPNHQIVLESMTFPDPVIEVAIEPKTKSDQEKLSLSIQKLAEEDPTFKVHLDQETGQTVIGGMGELHLDILVDRMRREFKVEANVGKPQVAYKETIRRKVENVEYTHKKQTGGSGQFAKVIINLEPFTGEDGATYEFENKVTGGRIPREYIPSVDAGAQDAMQYGVLAGYPLVNLKVTLLDGAFHEVDSSEMAFKIAGSQVLKKAAAQAQPVILEPIMAVEVTTPEDYMGDVIGDLNSRRGQIQAMEERSGARVVKAHVPLSEMFGYVGDLRSKTQGRANYSMVFDSYAEVPANVSKEIIAKATGQ</sequence>
<keyword id="KW-0963">Cytoplasm</keyword>
<keyword id="KW-0251">Elongation factor</keyword>
<keyword id="KW-0342">GTP-binding</keyword>
<keyword id="KW-0547">Nucleotide-binding</keyword>
<keyword id="KW-0648">Protein biosynthesis</keyword>
<keyword id="KW-1185">Reference proteome</keyword>
<protein>
    <recommendedName>
        <fullName evidence="1">Elongation factor G</fullName>
        <shortName evidence="1">EF-G</shortName>
    </recommendedName>
</protein>
<reference key="1">
    <citation type="journal article" date="2005" name="Proc. Natl. Acad. Sci. U.S.A.">
        <title>The complete genome sequence of Mycobacterium avium subspecies paratuberculosis.</title>
        <authorList>
            <person name="Li L."/>
            <person name="Bannantine J.P."/>
            <person name="Zhang Q."/>
            <person name="Amonsin A."/>
            <person name="May B.J."/>
            <person name="Alt D."/>
            <person name="Banerji N."/>
            <person name="Kanjilal S."/>
            <person name="Kapur V."/>
        </authorList>
    </citation>
    <scope>NUCLEOTIDE SEQUENCE [LARGE SCALE GENOMIC DNA]</scope>
    <source>
        <strain>ATCC BAA-968 / K-10</strain>
    </source>
</reference>
<proteinExistence type="inferred from homology"/>
<gene>
    <name evidence="1" type="primary">fusA</name>
    <name type="ordered locus">MAP_4142</name>
</gene>
<name>EFG_MYCPA</name>
<comment type="function">
    <text evidence="1">Catalyzes the GTP-dependent ribosomal translocation step during translation elongation. During this step, the ribosome changes from the pre-translocational (PRE) to the post-translocational (POST) state as the newly formed A-site-bound peptidyl-tRNA and P-site-bound deacylated tRNA move to the P and E sites, respectively. Catalyzes the coordinated movement of the two tRNA molecules, the mRNA and conformational changes in the ribosome.</text>
</comment>
<comment type="subcellular location">
    <subcellularLocation>
        <location evidence="1">Cytoplasm</location>
    </subcellularLocation>
</comment>
<comment type="similarity">
    <text evidence="1">Belongs to the TRAFAC class translation factor GTPase superfamily. Classic translation factor GTPase family. EF-G/EF-2 subfamily.</text>
</comment>
<accession>Q73SD2</accession>
<dbReference type="EMBL" id="AE016958">
    <property type="protein sequence ID" value="AAS06692.1"/>
    <property type="molecule type" value="Genomic_DNA"/>
</dbReference>
<dbReference type="RefSeq" id="WP_003879424.1">
    <property type="nucleotide sequence ID" value="NZ_CP106873.1"/>
</dbReference>
<dbReference type="SMR" id="Q73SD2"/>
<dbReference type="STRING" id="262316.MAP_4142"/>
<dbReference type="GeneID" id="75272004"/>
<dbReference type="KEGG" id="mpa:MAP_4142"/>
<dbReference type="eggNOG" id="COG0480">
    <property type="taxonomic scope" value="Bacteria"/>
</dbReference>
<dbReference type="HOGENOM" id="CLU_002794_4_1_11"/>
<dbReference type="Proteomes" id="UP000000580">
    <property type="component" value="Chromosome"/>
</dbReference>
<dbReference type="GO" id="GO:0005737">
    <property type="term" value="C:cytoplasm"/>
    <property type="evidence" value="ECO:0007669"/>
    <property type="project" value="UniProtKB-SubCell"/>
</dbReference>
<dbReference type="GO" id="GO:0005525">
    <property type="term" value="F:GTP binding"/>
    <property type="evidence" value="ECO:0007669"/>
    <property type="project" value="UniProtKB-UniRule"/>
</dbReference>
<dbReference type="GO" id="GO:0003924">
    <property type="term" value="F:GTPase activity"/>
    <property type="evidence" value="ECO:0007669"/>
    <property type="project" value="InterPro"/>
</dbReference>
<dbReference type="GO" id="GO:0003746">
    <property type="term" value="F:translation elongation factor activity"/>
    <property type="evidence" value="ECO:0007669"/>
    <property type="project" value="UniProtKB-UniRule"/>
</dbReference>
<dbReference type="GO" id="GO:0032790">
    <property type="term" value="P:ribosome disassembly"/>
    <property type="evidence" value="ECO:0007669"/>
    <property type="project" value="TreeGrafter"/>
</dbReference>
<dbReference type="CDD" id="cd01886">
    <property type="entry name" value="EF-G"/>
    <property type="match status" value="1"/>
</dbReference>
<dbReference type="CDD" id="cd16262">
    <property type="entry name" value="EFG_III"/>
    <property type="match status" value="1"/>
</dbReference>
<dbReference type="CDD" id="cd01434">
    <property type="entry name" value="EFG_mtEFG1_IV"/>
    <property type="match status" value="1"/>
</dbReference>
<dbReference type="CDD" id="cd03713">
    <property type="entry name" value="EFG_mtEFG_C"/>
    <property type="match status" value="1"/>
</dbReference>
<dbReference type="CDD" id="cd04088">
    <property type="entry name" value="EFG_mtEFG_II"/>
    <property type="match status" value="1"/>
</dbReference>
<dbReference type="FunFam" id="2.40.30.10:FF:000006">
    <property type="entry name" value="Elongation factor G"/>
    <property type="match status" value="1"/>
</dbReference>
<dbReference type="FunFam" id="3.30.230.10:FF:000003">
    <property type="entry name" value="Elongation factor G"/>
    <property type="match status" value="1"/>
</dbReference>
<dbReference type="FunFam" id="3.30.70.240:FF:000001">
    <property type="entry name" value="Elongation factor G"/>
    <property type="match status" value="1"/>
</dbReference>
<dbReference type="FunFam" id="3.30.70.870:FF:000001">
    <property type="entry name" value="Elongation factor G"/>
    <property type="match status" value="1"/>
</dbReference>
<dbReference type="FunFam" id="3.40.50.300:FF:000029">
    <property type="entry name" value="Elongation factor G"/>
    <property type="match status" value="1"/>
</dbReference>
<dbReference type="Gene3D" id="3.30.230.10">
    <property type="match status" value="1"/>
</dbReference>
<dbReference type="Gene3D" id="3.30.70.240">
    <property type="match status" value="1"/>
</dbReference>
<dbReference type="Gene3D" id="3.30.70.870">
    <property type="entry name" value="Elongation Factor G (Translational Gtpase), domain 3"/>
    <property type="match status" value="1"/>
</dbReference>
<dbReference type="Gene3D" id="3.40.50.300">
    <property type="entry name" value="P-loop containing nucleotide triphosphate hydrolases"/>
    <property type="match status" value="1"/>
</dbReference>
<dbReference type="Gene3D" id="2.40.30.10">
    <property type="entry name" value="Translation factors"/>
    <property type="match status" value="1"/>
</dbReference>
<dbReference type="HAMAP" id="MF_00054_B">
    <property type="entry name" value="EF_G_EF_2_B"/>
    <property type="match status" value="1"/>
</dbReference>
<dbReference type="InterPro" id="IPR041095">
    <property type="entry name" value="EFG_II"/>
</dbReference>
<dbReference type="InterPro" id="IPR009022">
    <property type="entry name" value="EFG_III"/>
</dbReference>
<dbReference type="InterPro" id="IPR035647">
    <property type="entry name" value="EFG_III/V"/>
</dbReference>
<dbReference type="InterPro" id="IPR047872">
    <property type="entry name" value="EFG_IV"/>
</dbReference>
<dbReference type="InterPro" id="IPR035649">
    <property type="entry name" value="EFG_V"/>
</dbReference>
<dbReference type="InterPro" id="IPR000640">
    <property type="entry name" value="EFG_V-like"/>
</dbReference>
<dbReference type="InterPro" id="IPR004161">
    <property type="entry name" value="EFTu-like_2"/>
</dbReference>
<dbReference type="InterPro" id="IPR031157">
    <property type="entry name" value="G_TR_CS"/>
</dbReference>
<dbReference type="InterPro" id="IPR027417">
    <property type="entry name" value="P-loop_NTPase"/>
</dbReference>
<dbReference type="InterPro" id="IPR020568">
    <property type="entry name" value="Ribosomal_Su5_D2-typ_SF"/>
</dbReference>
<dbReference type="InterPro" id="IPR014721">
    <property type="entry name" value="Ribsml_uS5_D2-typ_fold_subgr"/>
</dbReference>
<dbReference type="InterPro" id="IPR005225">
    <property type="entry name" value="Small_GTP-bd"/>
</dbReference>
<dbReference type="InterPro" id="IPR000795">
    <property type="entry name" value="T_Tr_GTP-bd_dom"/>
</dbReference>
<dbReference type="InterPro" id="IPR009000">
    <property type="entry name" value="Transl_B-barrel_sf"/>
</dbReference>
<dbReference type="InterPro" id="IPR004540">
    <property type="entry name" value="Transl_elong_EFG/EF2"/>
</dbReference>
<dbReference type="InterPro" id="IPR005517">
    <property type="entry name" value="Transl_elong_EFG/EF2_IV"/>
</dbReference>
<dbReference type="NCBIfam" id="TIGR00484">
    <property type="entry name" value="EF-G"/>
    <property type="match status" value="1"/>
</dbReference>
<dbReference type="NCBIfam" id="NF009381">
    <property type="entry name" value="PRK12740.1-5"/>
    <property type="match status" value="1"/>
</dbReference>
<dbReference type="NCBIfam" id="TIGR00231">
    <property type="entry name" value="small_GTP"/>
    <property type="match status" value="1"/>
</dbReference>
<dbReference type="PANTHER" id="PTHR43261:SF1">
    <property type="entry name" value="RIBOSOME-RELEASING FACTOR 2, MITOCHONDRIAL"/>
    <property type="match status" value="1"/>
</dbReference>
<dbReference type="PANTHER" id="PTHR43261">
    <property type="entry name" value="TRANSLATION ELONGATION FACTOR G-RELATED"/>
    <property type="match status" value="1"/>
</dbReference>
<dbReference type="Pfam" id="PF00679">
    <property type="entry name" value="EFG_C"/>
    <property type="match status" value="1"/>
</dbReference>
<dbReference type="Pfam" id="PF14492">
    <property type="entry name" value="EFG_III"/>
    <property type="match status" value="1"/>
</dbReference>
<dbReference type="Pfam" id="PF03764">
    <property type="entry name" value="EFG_IV"/>
    <property type="match status" value="1"/>
</dbReference>
<dbReference type="Pfam" id="PF00009">
    <property type="entry name" value="GTP_EFTU"/>
    <property type="match status" value="1"/>
</dbReference>
<dbReference type="Pfam" id="PF03144">
    <property type="entry name" value="GTP_EFTU_D2"/>
    <property type="match status" value="1"/>
</dbReference>
<dbReference type="PRINTS" id="PR00315">
    <property type="entry name" value="ELONGATNFCT"/>
</dbReference>
<dbReference type="SMART" id="SM00838">
    <property type="entry name" value="EFG_C"/>
    <property type="match status" value="1"/>
</dbReference>
<dbReference type="SMART" id="SM00889">
    <property type="entry name" value="EFG_IV"/>
    <property type="match status" value="1"/>
</dbReference>
<dbReference type="SUPFAM" id="SSF54980">
    <property type="entry name" value="EF-G C-terminal domain-like"/>
    <property type="match status" value="2"/>
</dbReference>
<dbReference type="SUPFAM" id="SSF52540">
    <property type="entry name" value="P-loop containing nucleoside triphosphate hydrolases"/>
    <property type="match status" value="1"/>
</dbReference>
<dbReference type="SUPFAM" id="SSF54211">
    <property type="entry name" value="Ribosomal protein S5 domain 2-like"/>
    <property type="match status" value="1"/>
</dbReference>
<dbReference type="SUPFAM" id="SSF50447">
    <property type="entry name" value="Translation proteins"/>
    <property type="match status" value="1"/>
</dbReference>
<dbReference type="PROSITE" id="PS00301">
    <property type="entry name" value="G_TR_1"/>
    <property type="match status" value="1"/>
</dbReference>
<dbReference type="PROSITE" id="PS51722">
    <property type="entry name" value="G_TR_2"/>
    <property type="match status" value="1"/>
</dbReference>
<evidence type="ECO:0000255" key="1">
    <source>
        <dbReference type="HAMAP-Rule" id="MF_00054"/>
    </source>
</evidence>